<protein>
    <recommendedName>
        <fullName evidence="6">Alditol oxidase</fullName>
        <ecNumber evidence="3">1.1.3.41</ecNumber>
    </recommendedName>
    <alternativeName>
        <fullName evidence="4">Xylitol oxidase</fullName>
    </alternativeName>
</protein>
<keyword id="KW-0903">Direct protein sequencing</keyword>
<keyword id="KW-0274">FAD</keyword>
<keyword id="KW-0285">Flavoprotein</keyword>
<keyword id="KW-0560">Oxidoreductase</keyword>
<sequence length="415" mass="44732">MSTAVTNWAGNITYTAKEVHRPATAEELADVVARSAWGACAGAAGHSFNEIADPGPDGVLLRLDALPAETDVDTTARTVRVGGGVRYAELARVVHAHGLALPNMASLPHISVAGSVATGTHGSGVTNGPLAAPVREVELVTADGSQVRIAPGERRFGGAVTSLGALGVVTALTLDLEPAFEVGQHLFTELPLRGLDFETVAAAGYSVSLFTDWREPGFRQVWLKRRTDQELPDFPWARPATVALHPVPGMPAENCTQQFGVPGPWHERLPHFRAEFTPSSGAELQSEYLLPRAHALDALDAVDRIRDTVAPVLQTCEVRTVAPDEQWLGPSHGRDTVALHFTWVKDTEAVLPVVRRLEEALDAFDPRPHWGKVFTTSAAALRARYPRLADFRALARELDPSGKFTNTFLRDLLDG</sequence>
<organism>
    <name type="scientific">Streptomyces sp. (strain IKD472 / FERM P-14339)</name>
    <dbReference type="NCBI Taxonomy" id="268810"/>
    <lineage>
        <taxon>Bacteria</taxon>
        <taxon>Bacillati</taxon>
        <taxon>Actinomycetota</taxon>
        <taxon>Actinomycetes</taxon>
        <taxon>Kitasatosporales</taxon>
        <taxon>Streptomycetaceae</taxon>
        <taxon>Streptomyces</taxon>
    </lineage>
</organism>
<dbReference type="EC" id="1.1.3.41" evidence="3"/>
<dbReference type="EMBL" id="D89822">
    <property type="protein sequence ID" value="BAA95146.1"/>
    <property type="molecule type" value="Genomic_DNA"/>
</dbReference>
<dbReference type="SMR" id="Q9KX73"/>
<dbReference type="KEGG" id="ag:BAA95146"/>
<dbReference type="BioCyc" id="MetaCyc:MONOMER-14456"/>
<dbReference type="GO" id="GO:0016020">
    <property type="term" value="C:membrane"/>
    <property type="evidence" value="ECO:0007669"/>
    <property type="project" value="InterPro"/>
</dbReference>
<dbReference type="GO" id="GO:0003885">
    <property type="term" value="F:D-arabinono-1,4-lactone oxidase activity"/>
    <property type="evidence" value="ECO:0007669"/>
    <property type="project" value="InterPro"/>
</dbReference>
<dbReference type="GO" id="GO:0071949">
    <property type="term" value="F:FAD binding"/>
    <property type="evidence" value="ECO:0007669"/>
    <property type="project" value="InterPro"/>
</dbReference>
<dbReference type="GO" id="GO:0080049">
    <property type="term" value="F:L-gulono-1,4-lactone dehydrogenase activity"/>
    <property type="evidence" value="ECO:0007669"/>
    <property type="project" value="TreeGrafter"/>
</dbReference>
<dbReference type="GO" id="GO:0050582">
    <property type="term" value="F:xylitol oxidase activity"/>
    <property type="evidence" value="ECO:0007669"/>
    <property type="project" value="UniProtKB-EC"/>
</dbReference>
<dbReference type="Gene3D" id="3.30.465.10">
    <property type="match status" value="1"/>
</dbReference>
<dbReference type="Gene3D" id="3.30.70.2520">
    <property type="match status" value="1"/>
</dbReference>
<dbReference type="Gene3D" id="3.30.70.2530">
    <property type="match status" value="1"/>
</dbReference>
<dbReference type="Gene3D" id="3.30.43.10">
    <property type="entry name" value="Uridine Diphospho-n-acetylenolpyruvylglucosamine Reductase, domain 2"/>
    <property type="match status" value="1"/>
</dbReference>
<dbReference type="Gene3D" id="1.10.45.10">
    <property type="entry name" value="Vanillyl-alcohol Oxidase, Chain A, domain 4"/>
    <property type="match status" value="1"/>
</dbReference>
<dbReference type="InterPro" id="IPR007173">
    <property type="entry name" value="ALO_C"/>
</dbReference>
<dbReference type="InterPro" id="IPR016166">
    <property type="entry name" value="FAD-bd_PCMH"/>
</dbReference>
<dbReference type="InterPro" id="IPR036318">
    <property type="entry name" value="FAD-bd_PCMH-like_sf"/>
</dbReference>
<dbReference type="InterPro" id="IPR016167">
    <property type="entry name" value="FAD-bd_PCMH_sub1"/>
</dbReference>
<dbReference type="InterPro" id="IPR016169">
    <property type="entry name" value="FAD-bd_PCMH_sub2"/>
</dbReference>
<dbReference type="InterPro" id="IPR010031">
    <property type="entry name" value="FAD_lactone_oxidase-like"/>
</dbReference>
<dbReference type="InterPro" id="IPR006094">
    <property type="entry name" value="Oxid_FAD_bind_N"/>
</dbReference>
<dbReference type="InterPro" id="IPR016171">
    <property type="entry name" value="Vanillyl_alc_oxidase_C-sub2"/>
</dbReference>
<dbReference type="PANTHER" id="PTHR43762:SF1">
    <property type="entry name" value="D-ARABINONO-1,4-LACTONE OXIDASE"/>
    <property type="match status" value="1"/>
</dbReference>
<dbReference type="PANTHER" id="PTHR43762">
    <property type="entry name" value="L-GULONOLACTONE OXIDASE"/>
    <property type="match status" value="1"/>
</dbReference>
<dbReference type="Pfam" id="PF04030">
    <property type="entry name" value="ALO"/>
    <property type="match status" value="1"/>
</dbReference>
<dbReference type="Pfam" id="PF01565">
    <property type="entry name" value="FAD_binding_4"/>
    <property type="match status" value="1"/>
</dbReference>
<dbReference type="PIRSF" id="PIRSF000136">
    <property type="entry name" value="LGO_GLO"/>
    <property type="match status" value="1"/>
</dbReference>
<dbReference type="SUPFAM" id="SSF56176">
    <property type="entry name" value="FAD-binding/transporter-associated domain-like"/>
    <property type="match status" value="1"/>
</dbReference>
<dbReference type="PROSITE" id="PS51387">
    <property type="entry name" value="FAD_PCMH"/>
    <property type="match status" value="1"/>
</dbReference>
<gene>
    <name evidence="4" type="primary">xyoA</name>
</gene>
<comment type="function">
    <text evidence="3">Oxidase that performs selective oxidation of the terminal primary hydroxyl group of several alditols, with a reduction of O2 to H2O2. Shows highest activity on xylitol and D-sorbitol, and to a lesser extent, can also use galactitol, D-mannitol, and D-arabitol as substrates in vitro. Is not active on D-glucose, D-xylose, D-galactose, D-mannose, D-fructose, L-sorbose, L-fucose, myoinositol, glycerol, ethyl alcohol, and meso-erythritol.</text>
</comment>
<comment type="catalytic activity">
    <reaction evidence="3">
        <text>an alditol + O2 = an aldose + H2O2</text>
        <dbReference type="Rhea" id="RHEA:25908"/>
        <dbReference type="Rhea" id="RHEA-COMP:9554"/>
        <dbReference type="Rhea" id="RHEA-COMP:9555"/>
        <dbReference type="ChEBI" id="CHEBI:15379"/>
        <dbReference type="ChEBI" id="CHEBI:15693"/>
        <dbReference type="ChEBI" id="CHEBI:16240"/>
        <dbReference type="ChEBI" id="CHEBI:17522"/>
        <dbReference type="EC" id="1.1.3.41"/>
    </reaction>
</comment>
<comment type="catalytic activity">
    <reaction evidence="3">
        <text>xylitol + O2 = D-xylose + H2O2</text>
        <dbReference type="Rhea" id="RHEA:22308"/>
        <dbReference type="ChEBI" id="CHEBI:15379"/>
        <dbReference type="ChEBI" id="CHEBI:16240"/>
        <dbReference type="ChEBI" id="CHEBI:17151"/>
        <dbReference type="ChEBI" id="CHEBI:53455"/>
        <dbReference type="EC" id="1.1.3.41"/>
    </reaction>
</comment>
<comment type="catalytic activity">
    <reaction evidence="3">
        <text>D-sorbitol + O2 = D-glucose + H2O2</text>
        <dbReference type="Rhea" id="RHEA:69524"/>
        <dbReference type="ChEBI" id="CHEBI:4167"/>
        <dbReference type="ChEBI" id="CHEBI:15379"/>
        <dbReference type="ChEBI" id="CHEBI:16240"/>
        <dbReference type="ChEBI" id="CHEBI:17924"/>
    </reaction>
</comment>
<comment type="cofactor">
    <cofactor evidence="3">
        <name>FAD</name>
        <dbReference type="ChEBI" id="CHEBI:57692"/>
    </cofactor>
    <text evidence="3">Binds 1 FAD covalently per subunit.</text>
</comment>
<comment type="biophysicochemical properties">
    <kinetics>
        <KM evidence="3">0.68 mM for xylitol</KM>
        <KM evidence="3">3.51 mM for D-sorbitol</KM>
        <KM evidence="3">1.08 mM for galactitol</KM>
        <Vmax evidence="3">29.2 umol/min/mg enzyme with xylitol as substrate</Vmax>
        <Vmax evidence="3">37.1 umol/min/mg enzyme with D-sorbitol as substrate</Vmax>
        <Vmax evidence="3">22.7 umol/min/mg enzyme with galactitol as substrate</Vmax>
    </kinetics>
    <phDependence>
        <text evidence="3">Optimum pH is 7.5. Is stable in the pH range from 5.5 to 10.5.</text>
    </phDependence>
    <temperatureDependence>
        <text evidence="3">Optimum temperature is 55 degrees Celsius. Is stable at temperatures up to 65 degrees Celsius.</text>
    </temperatureDependence>
</comment>
<comment type="subunit">
    <text evidence="3">Monomer.</text>
</comment>
<comment type="similarity">
    <text evidence="5">Belongs to the oxygen-dependent FAD-linked oxidoreductase family.</text>
</comment>
<reference key="1">
    <citation type="journal article" date="2000" name="J. Biosci. Bioeng.">
        <title>Isolation, characterization, and molecular cloning of a thermostable xylitol oxidase from Streptomyces sp. IKD472.</title>
        <authorList>
            <person name="Yamashita M."/>
            <person name="Omura H."/>
            <person name="Okamoto E."/>
            <person name="Furuya Y."/>
            <person name="Yabuuchi M."/>
            <person name="Fukahi K."/>
            <person name="Murooka Y."/>
        </authorList>
    </citation>
    <scope>NUCLEOTIDE SEQUENCE [GENOMIC DNA]</scope>
    <scope>PROTEIN SEQUENCE OF 1-32 AND 226-239</scope>
    <scope>FUNCTION</scope>
    <scope>CATALYTIC ACTIVITY</scope>
    <scope>SUBSTRATE SPECIFICITY</scope>
    <scope>BIOPHYSICOCHEMICAL PROPERTIES</scope>
    <scope>COFACTOR</scope>
    <scope>SUBUNIT</scope>
    <source>
        <strain>IKD472 / FERM P-14339</strain>
    </source>
</reference>
<evidence type="ECO:0000250" key="1">
    <source>
        <dbReference type="UniProtKB" id="Q9ZBU1"/>
    </source>
</evidence>
<evidence type="ECO:0000255" key="2">
    <source>
        <dbReference type="PROSITE-ProRule" id="PRU00718"/>
    </source>
</evidence>
<evidence type="ECO:0000269" key="3">
    <source>
    </source>
</evidence>
<evidence type="ECO:0000303" key="4">
    <source>
    </source>
</evidence>
<evidence type="ECO:0000305" key="5"/>
<evidence type="ECO:0000305" key="6">
    <source>
    </source>
</evidence>
<feature type="chain" id="PRO_0000128173" description="Alditol oxidase">
    <location>
        <begin position="1"/>
        <end position="415"/>
    </location>
</feature>
<feature type="domain" description="FAD-binding PCMH-type" evidence="2">
    <location>
        <begin position="12"/>
        <end position="179"/>
    </location>
</feature>
<feature type="binding site" evidence="1">
    <location>
        <position position="106"/>
    </location>
    <ligand>
        <name>FAD</name>
        <dbReference type="ChEBI" id="CHEBI:57692"/>
    </ligand>
</feature>
<feature type="binding site" evidence="1">
    <location>
        <position position="106"/>
    </location>
    <ligand>
        <name>xylitol</name>
        <dbReference type="ChEBI" id="CHEBI:17151"/>
    </ligand>
</feature>
<feature type="binding site" evidence="1">
    <location>
        <position position="111"/>
    </location>
    <ligand>
        <name>FAD</name>
        <dbReference type="ChEBI" id="CHEBI:57692"/>
    </ligand>
</feature>
<feature type="binding site" evidence="1">
    <location>
        <position position="114"/>
    </location>
    <ligand>
        <name>FAD</name>
        <dbReference type="ChEBI" id="CHEBI:57692"/>
    </ligand>
</feature>
<feature type="binding site" evidence="1">
    <location>
        <begin position="118"/>
        <end position="121"/>
    </location>
    <ligand>
        <name>FAD</name>
        <dbReference type="ChEBI" id="CHEBI:57692"/>
    </ligand>
</feature>
<feature type="binding site" evidence="1">
    <location>
        <position position="169"/>
    </location>
    <ligand>
        <name>FAD</name>
        <dbReference type="ChEBI" id="CHEBI:57692"/>
    </ligand>
</feature>
<feature type="binding site" evidence="1">
    <location>
        <position position="317"/>
    </location>
    <ligand>
        <name>xylitol</name>
        <dbReference type="ChEBI" id="CHEBI:17151"/>
    </ligand>
</feature>
<feature type="binding site" evidence="1">
    <location>
        <position position="319"/>
    </location>
    <ligand>
        <name>FAD</name>
        <dbReference type="ChEBI" id="CHEBI:57692"/>
    </ligand>
</feature>
<feature type="binding site" evidence="1">
    <location>
        <position position="319"/>
    </location>
    <ligand>
        <name>xylitol</name>
        <dbReference type="ChEBI" id="CHEBI:17151"/>
    </ligand>
</feature>
<feature type="binding site" evidence="1">
    <location>
        <position position="342"/>
    </location>
    <ligand>
        <name>xylitol</name>
        <dbReference type="ChEBI" id="CHEBI:17151"/>
    </ligand>
</feature>
<feature type="binding site" evidence="1">
    <location>
        <position position="369"/>
    </location>
    <ligand>
        <name>FAD</name>
        <dbReference type="ChEBI" id="CHEBI:57692"/>
    </ligand>
</feature>
<feature type="binding site" evidence="1">
    <location>
        <position position="372"/>
    </location>
    <ligand>
        <name>xylitol</name>
        <dbReference type="ChEBI" id="CHEBI:17151"/>
    </ligand>
</feature>
<feature type="modified residue" description="Pros-8alpha-FAD histidine" evidence="1">
    <location>
        <position position="46"/>
    </location>
</feature>
<proteinExistence type="evidence at protein level"/>
<accession>Q9KX73</accession>
<name>XYOA_STRSI</name>